<comment type="function">
    <text evidence="1">Acts as a chaperone.</text>
</comment>
<comment type="induction">
    <text evidence="1">By stress conditions e.g. heat shock (By similarity).</text>
</comment>
<comment type="similarity">
    <text evidence="3">Belongs to the heat shock protein 70 family.</text>
</comment>
<evidence type="ECO:0000250" key="1"/>
<evidence type="ECO:0000256" key="2">
    <source>
        <dbReference type="SAM" id="MobiDB-lite"/>
    </source>
</evidence>
<evidence type="ECO:0000305" key="3"/>
<organism>
    <name type="scientific">Haemophilus ducreyi (strain 35000HP / ATCC 700724)</name>
    <dbReference type="NCBI Taxonomy" id="233412"/>
    <lineage>
        <taxon>Bacteria</taxon>
        <taxon>Pseudomonadati</taxon>
        <taxon>Pseudomonadota</taxon>
        <taxon>Gammaproteobacteria</taxon>
        <taxon>Pasteurellales</taxon>
        <taxon>Pasteurellaceae</taxon>
        <taxon>Haemophilus</taxon>
    </lineage>
</organism>
<gene>
    <name type="primary">dnaK</name>
    <name type="ordered locus">HD_0189</name>
</gene>
<feature type="initiator methionine" description="Removed" evidence="1">
    <location>
        <position position="1"/>
    </location>
</feature>
<feature type="chain" id="PRO_0000078467" description="Chaperone protein DnaK">
    <location>
        <begin position="2"/>
        <end position="634"/>
    </location>
</feature>
<feature type="region of interest" description="Disordered" evidence="2">
    <location>
        <begin position="599"/>
        <end position="634"/>
    </location>
</feature>
<feature type="compositionally biased region" description="Low complexity" evidence="2">
    <location>
        <begin position="599"/>
        <end position="610"/>
    </location>
</feature>
<feature type="modified residue" description="Phosphothreonine; by autocatalysis" evidence="1">
    <location>
        <position position="198"/>
    </location>
</feature>
<sequence length="634" mass="68549">MGKIIGIDLGTTNSCVAVMDGDKPRVLENAEGARTTPSIIAYTDKETLVGQPAKRQAITNPKNTLFAIKRLIGRRFTDNEVQRDIEIMPFEIAKADNGDAWVNVKGDKLAPPQISAEVLKKMKKTAEDFLGEPVTEAVITVPAYFNDAQRQATKDAGRIAGLEVKRIINEPTAAALAYGLDSKKENQIIAVYDLGGGTFDISIIEIDNFDGEQTFEVRATNGDTHLGGEDFDNRVINYLVEEFQKEQGVDLRNDPMAMQRVKEAAEKAKIELSSAQETEVNLPYITADATGPKHLNIKVTRAKLEALVEDLVSRSLEPLKTALADAGLSVSEINDVILVGGQTRMPLVQKKVADFFGKEPRKDVNPDEAVAIGAAVQGGVLAGDVTDVLLLDVTPLSLGIETMGGVMTSLIEKNTTIPTKKSQVFSTAEDNQSAVTIHVLQGERKRAADNKSLGQFNLEGINPAPRGMPQIEVTFDIDANGIINVSAKDKNTGKEQQIKIQASSGLSDEEVEQMVRDAEANAESDRQFEELVQTRNQADSIAHATRKQISEAGDALTAEDKAKIETALAELETAAKGEDKAEIEAKIEAVIKASEPLMQAAQAKAQTNQAGEQQSSAKDDSVVDAEFEEVKENK</sequence>
<reference key="1">
    <citation type="submission" date="1995-05" db="EMBL/GenBank/DDBJ databases">
        <authorList>
            <person name="Parsons L.M."/>
        </authorList>
    </citation>
    <scope>NUCLEOTIDE SEQUENCE [GENOMIC DNA]</scope>
    <source>
        <strain>35000HP / ATCC 700724</strain>
    </source>
</reference>
<reference key="2">
    <citation type="submission" date="2003-06" db="EMBL/GenBank/DDBJ databases">
        <title>The complete genome sequence of Haemophilus ducreyi.</title>
        <authorList>
            <person name="Munson R.S. Jr."/>
            <person name="Ray W.C."/>
            <person name="Mahairas G."/>
            <person name="Sabo P."/>
            <person name="Mungur R."/>
            <person name="Johnson L."/>
            <person name="Nguyen D."/>
            <person name="Wang J."/>
            <person name="Forst C."/>
            <person name="Hood L."/>
        </authorList>
    </citation>
    <scope>NUCLEOTIDE SEQUENCE [LARGE SCALE GENOMIC DNA]</scope>
    <source>
        <strain>35000HP / ATCC 700724</strain>
    </source>
</reference>
<name>DNAK_HAEDU</name>
<dbReference type="EMBL" id="U25996">
    <property type="protein sequence ID" value="AAA67298.1"/>
    <property type="molecule type" value="Genomic_DNA"/>
</dbReference>
<dbReference type="EMBL" id="AE017143">
    <property type="protein sequence ID" value="AAP95182.1"/>
    <property type="molecule type" value="Genomic_DNA"/>
</dbReference>
<dbReference type="RefSeq" id="WP_010944236.1">
    <property type="nucleotide sequence ID" value="NC_002940.2"/>
</dbReference>
<dbReference type="SMR" id="P48209"/>
<dbReference type="STRING" id="233412.HD_0189"/>
<dbReference type="KEGG" id="hdu:HD_0189"/>
<dbReference type="eggNOG" id="COG0443">
    <property type="taxonomic scope" value="Bacteria"/>
</dbReference>
<dbReference type="HOGENOM" id="CLU_005965_2_1_6"/>
<dbReference type="OrthoDB" id="9766019at2"/>
<dbReference type="Proteomes" id="UP000001022">
    <property type="component" value="Chromosome"/>
</dbReference>
<dbReference type="GO" id="GO:0005524">
    <property type="term" value="F:ATP binding"/>
    <property type="evidence" value="ECO:0007669"/>
    <property type="project" value="UniProtKB-UniRule"/>
</dbReference>
<dbReference type="GO" id="GO:0140662">
    <property type="term" value="F:ATP-dependent protein folding chaperone"/>
    <property type="evidence" value="ECO:0007669"/>
    <property type="project" value="InterPro"/>
</dbReference>
<dbReference type="GO" id="GO:0051082">
    <property type="term" value="F:unfolded protein binding"/>
    <property type="evidence" value="ECO:0007669"/>
    <property type="project" value="InterPro"/>
</dbReference>
<dbReference type="CDD" id="cd10234">
    <property type="entry name" value="ASKHA_NBD_HSP70_DnaK-like"/>
    <property type="match status" value="1"/>
</dbReference>
<dbReference type="FunFam" id="2.60.34.10:FF:000014">
    <property type="entry name" value="Chaperone protein DnaK HSP70"/>
    <property type="match status" value="1"/>
</dbReference>
<dbReference type="FunFam" id="1.20.1270.10:FF:000001">
    <property type="entry name" value="Molecular chaperone DnaK"/>
    <property type="match status" value="1"/>
</dbReference>
<dbReference type="FunFam" id="3.30.420.40:FF:000004">
    <property type="entry name" value="Molecular chaperone DnaK"/>
    <property type="match status" value="1"/>
</dbReference>
<dbReference type="FunFam" id="3.90.640.10:FF:000003">
    <property type="entry name" value="Molecular chaperone DnaK"/>
    <property type="match status" value="1"/>
</dbReference>
<dbReference type="Gene3D" id="1.20.1270.10">
    <property type="match status" value="1"/>
</dbReference>
<dbReference type="Gene3D" id="3.30.420.40">
    <property type="match status" value="2"/>
</dbReference>
<dbReference type="Gene3D" id="3.90.640.10">
    <property type="entry name" value="Actin, Chain A, domain 4"/>
    <property type="match status" value="1"/>
</dbReference>
<dbReference type="Gene3D" id="2.60.34.10">
    <property type="entry name" value="Substrate Binding Domain Of DNAk, Chain A, domain 1"/>
    <property type="match status" value="1"/>
</dbReference>
<dbReference type="HAMAP" id="MF_00332">
    <property type="entry name" value="DnaK"/>
    <property type="match status" value="1"/>
</dbReference>
<dbReference type="InterPro" id="IPR043129">
    <property type="entry name" value="ATPase_NBD"/>
</dbReference>
<dbReference type="InterPro" id="IPR012725">
    <property type="entry name" value="Chaperone_DnaK"/>
</dbReference>
<dbReference type="InterPro" id="IPR018181">
    <property type="entry name" value="Heat_shock_70_CS"/>
</dbReference>
<dbReference type="InterPro" id="IPR029048">
    <property type="entry name" value="HSP70_C_sf"/>
</dbReference>
<dbReference type="InterPro" id="IPR029047">
    <property type="entry name" value="HSP70_peptide-bd_sf"/>
</dbReference>
<dbReference type="InterPro" id="IPR013126">
    <property type="entry name" value="Hsp_70_fam"/>
</dbReference>
<dbReference type="NCBIfam" id="NF001413">
    <property type="entry name" value="PRK00290.1"/>
    <property type="match status" value="1"/>
</dbReference>
<dbReference type="NCBIfam" id="NF003520">
    <property type="entry name" value="PRK05183.1"/>
    <property type="match status" value="1"/>
</dbReference>
<dbReference type="NCBIfam" id="TIGR02350">
    <property type="entry name" value="prok_dnaK"/>
    <property type="match status" value="1"/>
</dbReference>
<dbReference type="PANTHER" id="PTHR19375">
    <property type="entry name" value="HEAT SHOCK PROTEIN 70KDA"/>
    <property type="match status" value="1"/>
</dbReference>
<dbReference type="Pfam" id="PF00012">
    <property type="entry name" value="HSP70"/>
    <property type="match status" value="1"/>
</dbReference>
<dbReference type="PRINTS" id="PR00301">
    <property type="entry name" value="HEATSHOCK70"/>
</dbReference>
<dbReference type="SUPFAM" id="SSF53067">
    <property type="entry name" value="Actin-like ATPase domain"/>
    <property type="match status" value="2"/>
</dbReference>
<dbReference type="SUPFAM" id="SSF100934">
    <property type="entry name" value="Heat shock protein 70kD (HSP70), C-terminal subdomain"/>
    <property type="match status" value="1"/>
</dbReference>
<dbReference type="SUPFAM" id="SSF100920">
    <property type="entry name" value="Heat shock protein 70kD (HSP70), peptide-binding domain"/>
    <property type="match status" value="1"/>
</dbReference>
<dbReference type="PROSITE" id="PS00297">
    <property type="entry name" value="HSP70_1"/>
    <property type="match status" value="1"/>
</dbReference>
<dbReference type="PROSITE" id="PS00329">
    <property type="entry name" value="HSP70_2"/>
    <property type="match status" value="1"/>
</dbReference>
<dbReference type="PROSITE" id="PS01036">
    <property type="entry name" value="HSP70_3"/>
    <property type="match status" value="1"/>
</dbReference>
<protein>
    <recommendedName>
        <fullName>Chaperone protein DnaK</fullName>
    </recommendedName>
    <alternativeName>
        <fullName>HSP70</fullName>
    </alternativeName>
    <alternativeName>
        <fullName>Heat shock 70 kDa protein</fullName>
    </alternativeName>
    <alternativeName>
        <fullName>Heat shock protein 70</fullName>
    </alternativeName>
</protein>
<keyword id="KW-0067">ATP-binding</keyword>
<keyword id="KW-0143">Chaperone</keyword>
<keyword id="KW-0547">Nucleotide-binding</keyword>
<keyword id="KW-0597">Phosphoprotein</keyword>
<keyword id="KW-1185">Reference proteome</keyword>
<keyword id="KW-0346">Stress response</keyword>
<accession>P48209</accession>
<proteinExistence type="inferred from homology"/>